<proteinExistence type="inferred from homology"/>
<name>COX7A_DROME</name>
<dbReference type="EMBL" id="AE014297">
    <property type="protein sequence ID" value="AAF54227.1"/>
    <property type="molecule type" value="Genomic_DNA"/>
</dbReference>
<dbReference type="EMBL" id="BT058048">
    <property type="protein sequence ID" value="ACM78490.1"/>
    <property type="molecule type" value="mRNA"/>
</dbReference>
<dbReference type="RefSeq" id="NP_652184.2">
    <property type="nucleotide sequence ID" value="NM_143927.4"/>
</dbReference>
<dbReference type="SMR" id="Q9VHS2"/>
<dbReference type="BioGRID" id="72497">
    <property type="interactions" value="3"/>
</dbReference>
<dbReference type="ComplexPortal" id="CPX-8620">
    <property type="entry name" value="Mitochondrial respiratory chain complex IV"/>
</dbReference>
<dbReference type="DIP" id="DIP-17309N"/>
<dbReference type="FunCoup" id="Q9VHS2">
    <property type="interactions" value="562"/>
</dbReference>
<dbReference type="IntAct" id="Q9VHS2">
    <property type="interactions" value="3"/>
</dbReference>
<dbReference type="STRING" id="7227.FBpp0296960"/>
<dbReference type="PaxDb" id="7227-FBpp0296960"/>
<dbReference type="DNASU" id="50002"/>
<dbReference type="EnsemblMetazoa" id="FBtr0081855">
    <property type="protein sequence ID" value="FBpp0081344"/>
    <property type="gene ID" value="FBgn0040529"/>
</dbReference>
<dbReference type="GeneID" id="50002"/>
<dbReference type="KEGG" id="dme:Dmel_CG9603"/>
<dbReference type="UCSC" id="CG9603-RA">
    <property type="organism name" value="d. melanogaster"/>
</dbReference>
<dbReference type="AGR" id="FB:FBgn0040529"/>
<dbReference type="CTD" id="50002"/>
<dbReference type="FlyBase" id="FBgn0040529">
    <property type="gene designation" value="COX7A"/>
</dbReference>
<dbReference type="VEuPathDB" id="VectorBase:FBgn0040529"/>
<dbReference type="eggNOG" id="ENOG502SBK9">
    <property type="taxonomic scope" value="Eukaryota"/>
</dbReference>
<dbReference type="HOGENOM" id="CLU_188593_0_0_1"/>
<dbReference type="InParanoid" id="Q9VHS2"/>
<dbReference type="OrthoDB" id="5966508at2759"/>
<dbReference type="PhylomeDB" id="Q9VHS2"/>
<dbReference type="Reactome" id="R-DME-5628897">
    <property type="pathway name" value="TP53 Regulates Metabolic Genes"/>
</dbReference>
<dbReference type="Reactome" id="R-DME-611105">
    <property type="pathway name" value="Respiratory electron transport"/>
</dbReference>
<dbReference type="Reactome" id="R-DME-9707564">
    <property type="pathway name" value="Cytoprotection by HMOX1"/>
</dbReference>
<dbReference type="Reactome" id="R-DME-9864848">
    <property type="pathway name" value="Complex IV assembly"/>
</dbReference>
<dbReference type="UniPathway" id="UPA00705"/>
<dbReference type="BioGRID-ORCS" id="50002">
    <property type="hits" value="0 hits in 3 CRISPR screens"/>
</dbReference>
<dbReference type="ChiTaRS" id="COX7A">
    <property type="organism name" value="fly"/>
</dbReference>
<dbReference type="GenomeRNAi" id="50002"/>
<dbReference type="PRO" id="PR:Q9VHS2"/>
<dbReference type="Proteomes" id="UP000000803">
    <property type="component" value="Chromosome 3R"/>
</dbReference>
<dbReference type="Bgee" id="FBgn0040529">
    <property type="expression patterns" value="Expressed in adult Malpighian tubule (Drosophila) and 277 other cell types or tissues"/>
</dbReference>
<dbReference type="ExpressionAtlas" id="Q9VHS2">
    <property type="expression patterns" value="baseline and differential"/>
</dbReference>
<dbReference type="GO" id="GO:0005743">
    <property type="term" value="C:mitochondrial inner membrane"/>
    <property type="evidence" value="ECO:0000314"/>
    <property type="project" value="FlyBase"/>
</dbReference>
<dbReference type="GO" id="GO:0005739">
    <property type="term" value="C:mitochondrion"/>
    <property type="evidence" value="ECO:0007005"/>
    <property type="project" value="FlyBase"/>
</dbReference>
<dbReference type="GO" id="GO:0098803">
    <property type="term" value="C:respiratory chain complex"/>
    <property type="evidence" value="ECO:0000318"/>
    <property type="project" value="GO_Central"/>
</dbReference>
<dbReference type="GO" id="GO:0045277">
    <property type="term" value="C:respiratory chain complex IV"/>
    <property type="evidence" value="ECO:0000314"/>
    <property type="project" value="FlyBase"/>
</dbReference>
<dbReference type="GO" id="GO:0016491">
    <property type="term" value="F:oxidoreductase activity"/>
    <property type="evidence" value="ECO:0007669"/>
    <property type="project" value="UniProtKB-KW"/>
</dbReference>
<dbReference type="GO" id="GO:0006123">
    <property type="term" value="P:mitochondrial electron transport, cytochrome c to oxygen"/>
    <property type="evidence" value="ECO:0007669"/>
    <property type="project" value="InterPro"/>
</dbReference>
<dbReference type="GO" id="GO:0097250">
    <property type="term" value="P:mitochondrial respirasome assembly"/>
    <property type="evidence" value="ECO:0000318"/>
    <property type="project" value="GO_Central"/>
</dbReference>
<dbReference type="CDD" id="cd00928">
    <property type="entry name" value="Cyt_c_Oxidase_VIIa"/>
    <property type="match status" value="1"/>
</dbReference>
<dbReference type="FunFam" id="4.10.91.10:FF:000001">
    <property type="entry name" value="Cytochrome c oxidase subunit 7A1, mitochondrial"/>
    <property type="match status" value="1"/>
</dbReference>
<dbReference type="Gene3D" id="4.10.91.10">
    <property type="entry name" value="Cytochrome c oxidase, subunit VIIa"/>
    <property type="match status" value="1"/>
</dbReference>
<dbReference type="InterPro" id="IPR036539">
    <property type="entry name" value="Cyt_c_oxidase_su7a_sf"/>
</dbReference>
<dbReference type="InterPro" id="IPR003177">
    <property type="entry name" value="Cytc_oxidase_su7a_met"/>
</dbReference>
<dbReference type="PANTHER" id="PTHR10510">
    <property type="entry name" value="CYTOCHROME C OXIDASE POLYPEPTIDE 7A"/>
    <property type="match status" value="1"/>
</dbReference>
<dbReference type="PANTHER" id="PTHR10510:SF11">
    <property type="entry name" value="CYTOCHROME C OXIDASE SUBUNIT 7A, MITOCHONDRIAL"/>
    <property type="match status" value="1"/>
</dbReference>
<dbReference type="SUPFAM" id="SSF81419">
    <property type="entry name" value="Mitochondrial cytochrome c oxidase subunit VIIa"/>
    <property type="match status" value="1"/>
</dbReference>
<reference key="1">
    <citation type="journal article" date="2000" name="Science">
        <title>The genome sequence of Drosophila melanogaster.</title>
        <authorList>
            <person name="Adams M.D."/>
            <person name="Celniker S.E."/>
            <person name="Holt R.A."/>
            <person name="Evans C.A."/>
            <person name="Gocayne J.D."/>
            <person name="Amanatides P.G."/>
            <person name="Scherer S.E."/>
            <person name="Li P.W."/>
            <person name="Hoskins R.A."/>
            <person name="Galle R.F."/>
            <person name="George R.A."/>
            <person name="Lewis S.E."/>
            <person name="Richards S."/>
            <person name="Ashburner M."/>
            <person name="Henderson S.N."/>
            <person name="Sutton G.G."/>
            <person name="Wortman J.R."/>
            <person name="Yandell M.D."/>
            <person name="Zhang Q."/>
            <person name="Chen L.X."/>
            <person name="Brandon R.C."/>
            <person name="Rogers Y.-H.C."/>
            <person name="Blazej R.G."/>
            <person name="Champe M."/>
            <person name="Pfeiffer B.D."/>
            <person name="Wan K.H."/>
            <person name="Doyle C."/>
            <person name="Baxter E.G."/>
            <person name="Helt G."/>
            <person name="Nelson C.R."/>
            <person name="Miklos G.L.G."/>
            <person name="Abril J.F."/>
            <person name="Agbayani A."/>
            <person name="An H.-J."/>
            <person name="Andrews-Pfannkoch C."/>
            <person name="Baldwin D."/>
            <person name="Ballew R.M."/>
            <person name="Basu A."/>
            <person name="Baxendale J."/>
            <person name="Bayraktaroglu L."/>
            <person name="Beasley E.M."/>
            <person name="Beeson K.Y."/>
            <person name="Benos P.V."/>
            <person name="Berman B.P."/>
            <person name="Bhandari D."/>
            <person name="Bolshakov S."/>
            <person name="Borkova D."/>
            <person name="Botchan M.R."/>
            <person name="Bouck J."/>
            <person name="Brokstein P."/>
            <person name="Brottier P."/>
            <person name="Burtis K.C."/>
            <person name="Busam D.A."/>
            <person name="Butler H."/>
            <person name="Cadieu E."/>
            <person name="Center A."/>
            <person name="Chandra I."/>
            <person name="Cherry J.M."/>
            <person name="Cawley S."/>
            <person name="Dahlke C."/>
            <person name="Davenport L.B."/>
            <person name="Davies P."/>
            <person name="de Pablos B."/>
            <person name="Delcher A."/>
            <person name="Deng Z."/>
            <person name="Mays A.D."/>
            <person name="Dew I."/>
            <person name="Dietz S.M."/>
            <person name="Dodson K."/>
            <person name="Doup L.E."/>
            <person name="Downes M."/>
            <person name="Dugan-Rocha S."/>
            <person name="Dunkov B.C."/>
            <person name="Dunn P."/>
            <person name="Durbin K.J."/>
            <person name="Evangelista C.C."/>
            <person name="Ferraz C."/>
            <person name="Ferriera S."/>
            <person name="Fleischmann W."/>
            <person name="Fosler C."/>
            <person name="Gabrielian A.E."/>
            <person name="Garg N.S."/>
            <person name="Gelbart W.M."/>
            <person name="Glasser K."/>
            <person name="Glodek A."/>
            <person name="Gong F."/>
            <person name="Gorrell J.H."/>
            <person name="Gu Z."/>
            <person name="Guan P."/>
            <person name="Harris M."/>
            <person name="Harris N.L."/>
            <person name="Harvey D.A."/>
            <person name="Heiman T.J."/>
            <person name="Hernandez J.R."/>
            <person name="Houck J."/>
            <person name="Hostin D."/>
            <person name="Houston K.A."/>
            <person name="Howland T.J."/>
            <person name="Wei M.-H."/>
            <person name="Ibegwam C."/>
            <person name="Jalali M."/>
            <person name="Kalush F."/>
            <person name="Karpen G.H."/>
            <person name="Ke Z."/>
            <person name="Kennison J.A."/>
            <person name="Ketchum K.A."/>
            <person name="Kimmel B.E."/>
            <person name="Kodira C.D."/>
            <person name="Kraft C.L."/>
            <person name="Kravitz S."/>
            <person name="Kulp D."/>
            <person name="Lai Z."/>
            <person name="Lasko P."/>
            <person name="Lei Y."/>
            <person name="Levitsky A.A."/>
            <person name="Li J.H."/>
            <person name="Li Z."/>
            <person name="Liang Y."/>
            <person name="Lin X."/>
            <person name="Liu X."/>
            <person name="Mattei B."/>
            <person name="McIntosh T.C."/>
            <person name="McLeod M.P."/>
            <person name="McPherson D."/>
            <person name="Merkulov G."/>
            <person name="Milshina N.V."/>
            <person name="Mobarry C."/>
            <person name="Morris J."/>
            <person name="Moshrefi A."/>
            <person name="Mount S.M."/>
            <person name="Moy M."/>
            <person name="Murphy B."/>
            <person name="Murphy L."/>
            <person name="Muzny D.M."/>
            <person name="Nelson D.L."/>
            <person name="Nelson D.R."/>
            <person name="Nelson K.A."/>
            <person name="Nixon K."/>
            <person name="Nusskern D.R."/>
            <person name="Pacleb J.M."/>
            <person name="Palazzolo M."/>
            <person name="Pittman G.S."/>
            <person name="Pan S."/>
            <person name="Pollard J."/>
            <person name="Puri V."/>
            <person name="Reese M.G."/>
            <person name="Reinert K."/>
            <person name="Remington K."/>
            <person name="Saunders R.D.C."/>
            <person name="Scheeler F."/>
            <person name="Shen H."/>
            <person name="Shue B.C."/>
            <person name="Siden-Kiamos I."/>
            <person name="Simpson M."/>
            <person name="Skupski M.P."/>
            <person name="Smith T.J."/>
            <person name="Spier E."/>
            <person name="Spradling A.C."/>
            <person name="Stapleton M."/>
            <person name="Strong R."/>
            <person name="Sun E."/>
            <person name="Svirskas R."/>
            <person name="Tector C."/>
            <person name="Turner R."/>
            <person name="Venter E."/>
            <person name="Wang A.H."/>
            <person name="Wang X."/>
            <person name="Wang Z.-Y."/>
            <person name="Wassarman D.A."/>
            <person name="Weinstock G.M."/>
            <person name="Weissenbach J."/>
            <person name="Williams S.M."/>
            <person name="Woodage T."/>
            <person name="Worley K.C."/>
            <person name="Wu D."/>
            <person name="Yang S."/>
            <person name="Yao Q.A."/>
            <person name="Ye J."/>
            <person name="Yeh R.-F."/>
            <person name="Zaveri J.S."/>
            <person name="Zhan M."/>
            <person name="Zhang G."/>
            <person name="Zhao Q."/>
            <person name="Zheng L."/>
            <person name="Zheng X.H."/>
            <person name="Zhong F.N."/>
            <person name="Zhong W."/>
            <person name="Zhou X."/>
            <person name="Zhu S.C."/>
            <person name="Zhu X."/>
            <person name="Smith H.O."/>
            <person name="Gibbs R.A."/>
            <person name="Myers E.W."/>
            <person name="Rubin G.M."/>
            <person name="Venter J.C."/>
        </authorList>
    </citation>
    <scope>NUCLEOTIDE SEQUENCE [LARGE SCALE GENOMIC DNA]</scope>
    <source>
        <strain>Berkeley</strain>
    </source>
</reference>
<reference key="2">
    <citation type="journal article" date="2002" name="Genome Biol.">
        <title>Annotation of the Drosophila melanogaster euchromatic genome: a systematic review.</title>
        <authorList>
            <person name="Misra S."/>
            <person name="Crosby M.A."/>
            <person name="Mungall C.J."/>
            <person name="Matthews B.B."/>
            <person name="Campbell K.S."/>
            <person name="Hradecky P."/>
            <person name="Huang Y."/>
            <person name="Kaminker J.S."/>
            <person name="Millburn G.H."/>
            <person name="Prochnik S.E."/>
            <person name="Smith C.D."/>
            <person name="Tupy J.L."/>
            <person name="Whitfield E.J."/>
            <person name="Bayraktaroglu L."/>
            <person name="Berman B.P."/>
            <person name="Bettencourt B.R."/>
            <person name="Celniker S.E."/>
            <person name="de Grey A.D.N.J."/>
            <person name="Drysdale R.A."/>
            <person name="Harris N.L."/>
            <person name="Richter J."/>
            <person name="Russo S."/>
            <person name="Schroeder A.J."/>
            <person name="Shu S.Q."/>
            <person name="Stapleton M."/>
            <person name="Yamada C."/>
            <person name="Ashburner M."/>
            <person name="Gelbart W.M."/>
            <person name="Rubin G.M."/>
            <person name="Lewis S.E."/>
        </authorList>
    </citation>
    <scope>GENOME REANNOTATION</scope>
    <source>
        <strain>Berkeley</strain>
    </source>
</reference>
<reference key="3">
    <citation type="submission" date="2009-02" db="EMBL/GenBank/DDBJ databases">
        <authorList>
            <person name="Carlson J.W."/>
            <person name="Booth B."/>
            <person name="Frise E."/>
            <person name="Park S."/>
            <person name="Wan K.H."/>
            <person name="Yu C."/>
            <person name="Celniker S.E."/>
        </authorList>
    </citation>
    <scope>NUCLEOTIDE SEQUENCE [LARGE SCALE MRNA]</scope>
    <source>
        <strain>Berkeley</strain>
        <tissue>Ovary</tissue>
    </source>
</reference>
<evidence type="ECO:0000250" key="1">
    <source>
        <dbReference type="UniProtKB" id="P10174"/>
    </source>
</evidence>
<evidence type="ECO:0000255" key="2"/>
<evidence type="ECO:0000305" key="3"/>
<evidence type="ECO:0000312" key="4">
    <source>
        <dbReference type="FlyBase" id="FBgn0040529"/>
    </source>
</evidence>
<protein>
    <recommendedName>
        <fullName>Cytochrome c oxidase subunit 7A, mitochondrial</fullName>
    </recommendedName>
    <alternativeName>
        <fullName>Cytochrome c oxidase subunit VIIa</fullName>
    </alternativeName>
</protein>
<keyword id="KW-0472">Membrane</keyword>
<keyword id="KW-0496">Mitochondrion</keyword>
<keyword id="KW-0999">Mitochondrion inner membrane</keyword>
<keyword id="KW-0560">Oxidoreductase</keyword>
<keyword id="KW-1185">Reference proteome</keyword>
<keyword id="KW-0809">Transit peptide</keyword>
<keyword id="KW-0812">Transmembrane</keyword>
<keyword id="KW-1133">Transmembrane helix</keyword>
<accession>Q9VHS2</accession>
<accession>B9EQX3</accession>
<comment type="function">
    <text evidence="1">Component of the cytochrome c oxidase, the last enzyme in the mitochondrial electron transport chain which drives oxidative phosphorylation. The respiratory chain contains 3 multisubunit complexes succinate dehydrogenase (complex II, CII), ubiquinol-cytochrome c oxidoreductase (cytochrome b-c1 complex, complex III, CIII) and cytochrome c oxidase (complex IV, CIV), that cooperate to transfer electrons derived from NADH and succinate to molecular oxygen, creating an electrochemical gradient over the inner membrane that drives transmembrane transport and the ATP synthase. Cytochrome c oxidase is the component of the respiratory chain that catalyzes the reduction of oxygen to water. Electrons originating from reduced cytochrome c in the intermembrane space (IMS) are transferred via the dinuclear copper A center (CU(A)) of subunit 2 and heme A of subunit 1 to the active site in subunit 1, a binuclear center (BNC) formed by heme A3 and copper B (CU(B)). The BNC reduces molecular oxygen to 2 water molecules using 4 electrons from cytochrome c in the IMS and 4 protons from the mitochondrial matrix.</text>
</comment>
<comment type="pathway">
    <text evidence="1">Energy metabolism; oxidative phosphorylation.</text>
</comment>
<comment type="subunit">
    <text evidence="1">Component of the cytochrome c oxidase (complex IV, CIV), a multisubunit enzyme composed of a catalytic core of 3 subunits and several supernumerary subunits. The complex exists as a monomer or a dimer and forms supercomplexes (SCs) in the inner mitochondrial membrane with ubiquinol-cytochrome c oxidoreductase (cytochrome b-c1 complex, complex III, CIII).</text>
</comment>
<comment type="subcellular location">
    <subcellularLocation>
        <location evidence="1">Mitochondrion inner membrane</location>
        <topology evidence="1">Single-pass membrane protein</topology>
    </subcellularLocation>
</comment>
<comment type="similarity">
    <text evidence="3">Belongs to the cytochrome c oxidase VIIa family.</text>
</comment>
<feature type="transit peptide" description="Mitochondrion" evidence="2">
    <location>
        <begin position="1"/>
        <end position="31"/>
    </location>
</feature>
<feature type="chain" id="PRO_0000006153" description="Cytochrome c oxidase subunit 7A, mitochondrial">
    <location>
        <begin position="32"/>
        <end position="89"/>
    </location>
</feature>
<feature type="topological domain" description="Mitochondrial matrix" evidence="1">
    <location>
        <begin position="32"/>
        <end position="58"/>
    </location>
</feature>
<feature type="transmembrane region" description="Helical" evidence="2">
    <location>
        <begin position="59"/>
        <end position="81"/>
    </location>
</feature>
<feature type="topological domain" description="Mitochondrial intermembrane" evidence="1">
    <location>
        <begin position="82"/>
        <end position="89"/>
    </location>
</feature>
<gene>
    <name evidence="4" type="primary">COX7A</name>
    <name evidence="4" type="ORF">CG9603</name>
</gene>
<organism>
    <name type="scientific">Drosophila melanogaster</name>
    <name type="common">Fruit fly</name>
    <dbReference type="NCBI Taxonomy" id="7227"/>
    <lineage>
        <taxon>Eukaryota</taxon>
        <taxon>Metazoa</taxon>
        <taxon>Ecdysozoa</taxon>
        <taxon>Arthropoda</taxon>
        <taxon>Hexapoda</taxon>
        <taxon>Insecta</taxon>
        <taxon>Pterygota</taxon>
        <taxon>Neoptera</taxon>
        <taxon>Endopterygota</taxon>
        <taxon>Diptera</taxon>
        <taxon>Brachycera</taxon>
        <taxon>Muscomorpha</taxon>
        <taxon>Ephydroidea</taxon>
        <taxon>Drosophilidae</taxon>
        <taxon>Drosophila</taxon>
        <taxon>Sophophora</taxon>
    </lineage>
</organism>
<sequence length="89" mass="9902">MMNLSRAVVRSFATTAGRRSAAVPKDQIEKGYFEIRKVQEHFQKKDGKPVFLKGSVVDNVLYRVTVALALVGIGGMGKLFYELSVPKKE</sequence>